<gene>
    <name type="ordered locus">At5g38270</name>
    <name type="ORF">MXA21.4</name>
</gene>
<feature type="chain" id="PRO_0000283533" description="Putative F-box protein At5g38270">
    <location>
        <begin position="1"/>
        <end position="406"/>
    </location>
</feature>
<feature type="domain" description="F-box">
    <location>
        <begin position="20"/>
        <end position="67"/>
    </location>
</feature>
<dbReference type="EMBL" id="AB005247">
    <property type="protein sequence ID" value="BAB11293.1"/>
    <property type="molecule type" value="Genomic_DNA"/>
</dbReference>
<dbReference type="EMBL" id="CP002688">
    <property type="protein sequence ID" value="AED94288.1"/>
    <property type="molecule type" value="Genomic_DNA"/>
</dbReference>
<dbReference type="RefSeq" id="NP_198643.2">
    <property type="nucleotide sequence ID" value="NM_123188.2"/>
</dbReference>
<dbReference type="FunCoup" id="Q9FF30">
    <property type="interactions" value="25"/>
</dbReference>
<dbReference type="PaxDb" id="3702-AT5G38270.1"/>
<dbReference type="EnsemblPlants" id="AT5G38270.1">
    <property type="protein sequence ID" value="AT5G38270.1"/>
    <property type="gene ID" value="AT5G38270"/>
</dbReference>
<dbReference type="GeneID" id="833809"/>
<dbReference type="Gramene" id="AT5G38270.1">
    <property type="protein sequence ID" value="AT5G38270.1"/>
    <property type="gene ID" value="AT5G38270"/>
</dbReference>
<dbReference type="KEGG" id="ath:AT5G38270"/>
<dbReference type="Araport" id="AT5G38270"/>
<dbReference type="TAIR" id="AT5G38270">
    <property type="gene designation" value="ATFDB37"/>
</dbReference>
<dbReference type="HOGENOM" id="CLU_019286_7_1_1"/>
<dbReference type="InParanoid" id="Q9FF30"/>
<dbReference type="OMA" id="WIFNYRY"/>
<dbReference type="PhylomeDB" id="Q9FF30"/>
<dbReference type="PRO" id="PR:Q9FF30"/>
<dbReference type="Proteomes" id="UP000006548">
    <property type="component" value="Chromosome 5"/>
</dbReference>
<dbReference type="ExpressionAtlas" id="Q9FF30">
    <property type="expression patterns" value="baseline and differential"/>
</dbReference>
<dbReference type="CDD" id="cd09917">
    <property type="entry name" value="F-box_SF"/>
    <property type="match status" value="1"/>
</dbReference>
<dbReference type="Gene3D" id="1.20.1280.50">
    <property type="match status" value="1"/>
</dbReference>
<dbReference type="InterPro" id="IPR050942">
    <property type="entry name" value="F-box_BR-signaling"/>
</dbReference>
<dbReference type="InterPro" id="IPR001810">
    <property type="entry name" value="F-box_dom"/>
</dbReference>
<dbReference type="InterPro" id="IPR005174">
    <property type="entry name" value="KIB1-4_b-propeller"/>
</dbReference>
<dbReference type="PANTHER" id="PTHR44259:SF104">
    <property type="entry name" value="F-BOX ONLY PROTEIN (DUF295)-RELATED"/>
    <property type="match status" value="1"/>
</dbReference>
<dbReference type="PANTHER" id="PTHR44259">
    <property type="entry name" value="OS07G0183000 PROTEIN-RELATED"/>
    <property type="match status" value="1"/>
</dbReference>
<dbReference type="Pfam" id="PF03478">
    <property type="entry name" value="Beta-prop_KIB1-4"/>
    <property type="match status" value="1"/>
</dbReference>
<dbReference type="Pfam" id="PF00646">
    <property type="entry name" value="F-box"/>
    <property type="match status" value="1"/>
</dbReference>
<sequence>MYTPNDSMREEISLKVFVNHDWSKLCPDILRSILESLSSTDFHRAKTVCSDWYSNWKTCVKPLCPWRIMYVKDSLMLFKPGEDKIYKGTNVGLSNDSYYMASSGNWLLMVDSHLGFYIFNLLTSKRIDLPSMESSIRGGKVRFEQNHEHGFNWGHFVEPSRKVTVSKITITRESRAVLWIDERTGDFVVAWIFNYRYLFSYKKGDDSWWNWNNHWNMESLNLSFLDLAYRNSKLYIYITKSHIKVVDFSGNDPIEVIDKNPYWEHPFRYLTKKGEYINKRRIAIQKSGDVLIILSVLAQRSKEKVLFYIFKMNLASKIWERVESIGDDEMLIFGHGVTIRAPVQDVGDGIKSGSICFVSDVWPPYYSPAATNWGVFDLATSIIKWSKKDSFNNRYVQTYLFFPGFA</sequence>
<accession>Q9FF30</accession>
<proteinExistence type="predicted"/>
<organism>
    <name type="scientific">Arabidopsis thaliana</name>
    <name type="common">Mouse-ear cress</name>
    <dbReference type="NCBI Taxonomy" id="3702"/>
    <lineage>
        <taxon>Eukaryota</taxon>
        <taxon>Viridiplantae</taxon>
        <taxon>Streptophyta</taxon>
        <taxon>Embryophyta</taxon>
        <taxon>Tracheophyta</taxon>
        <taxon>Spermatophyta</taxon>
        <taxon>Magnoliopsida</taxon>
        <taxon>eudicotyledons</taxon>
        <taxon>Gunneridae</taxon>
        <taxon>Pentapetalae</taxon>
        <taxon>rosids</taxon>
        <taxon>malvids</taxon>
        <taxon>Brassicales</taxon>
        <taxon>Brassicaceae</taxon>
        <taxon>Camelineae</taxon>
        <taxon>Arabidopsis</taxon>
    </lineage>
</organism>
<keyword id="KW-1185">Reference proteome</keyword>
<protein>
    <recommendedName>
        <fullName>Putative F-box protein At5g38270</fullName>
    </recommendedName>
</protein>
<reference key="1">
    <citation type="journal article" date="1997" name="DNA Res.">
        <title>Structural analysis of Arabidopsis thaliana chromosome 5. I. Sequence features of the 1.6 Mb regions covered by twenty physically assigned P1 clones.</title>
        <authorList>
            <person name="Sato S."/>
            <person name="Kotani H."/>
            <person name="Nakamura Y."/>
            <person name="Kaneko T."/>
            <person name="Asamizu E."/>
            <person name="Fukami M."/>
            <person name="Miyajima N."/>
            <person name="Tabata S."/>
        </authorList>
    </citation>
    <scope>NUCLEOTIDE SEQUENCE [LARGE SCALE GENOMIC DNA]</scope>
    <source>
        <strain>cv. Columbia</strain>
    </source>
</reference>
<reference key="2">
    <citation type="journal article" date="2017" name="Plant J.">
        <title>Araport11: a complete reannotation of the Arabidopsis thaliana reference genome.</title>
        <authorList>
            <person name="Cheng C.Y."/>
            <person name="Krishnakumar V."/>
            <person name="Chan A.P."/>
            <person name="Thibaud-Nissen F."/>
            <person name="Schobel S."/>
            <person name="Town C.D."/>
        </authorList>
    </citation>
    <scope>GENOME REANNOTATION</scope>
    <source>
        <strain>cv. Columbia</strain>
    </source>
</reference>
<name>FB267_ARATH</name>